<name>ZN449_PANTR</name>
<dbReference type="EMBL" id="DQ977317">
    <property type="protein sequence ID" value="ABM91917.1"/>
    <property type="molecule type" value="Genomic_DNA"/>
</dbReference>
<dbReference type="RefSeq" id="NP_001074958.1">
    <property type="nucleotide sequence ID" value="NM_001081489.1"/>
</dbReference>
<dbReference type="RefSeq" id="XP_009437948.1">
    <property type="nucleotide sequence ID" value="XM_009439673.5"/>
</dbReference>
<dbReference type="RefSeq" id="XP_063659877.1">
    <property type="nucleotide sequence ID" value="XM_063803807.1"/>
</dbReference>
<dbReference type="SMR" id="A2T6W2"/>
<dbReference type="FunCoup" id="A2T6W2">
    <property type="interactions" value="344"/>
</dbReference>
<dbReference type="STRING" id="9598.ENSPTRP00000038417"/>
<dbReference type="PaxDb" id="9598-ENSPTRP00000038417"/>
<dbReference type="Ensembl" id="ENSPTRT00000041597.5">
    <property type="protein sequence ID" value="ENSPTRP00000038417.4"/>
    <property type="gene ID" value="ENSPTRG00000022299.5"/>
</dbReference>
<dbReference type="GeneID" id="473793"/>
<dbReference type="KEGG" id="ptr:473793"/>
<dbReference type="CTD" id="203523"/>
<dbReference type="VGNC" id="VGNC:1179">
    <property type="gene designation" value="ZNF449"/>
</dbReference>
<dbReference type="eggNOG" id="KOG1721">
    <property type="taxonomic scope" value="Eukaryota"/>
</dbReference>
<dbReference type="GeneTree" id="ENSGT00940000160108"/>
<dbReference type="HOGENOM" id="CLU_002678_49_8_1"/>
<dbReference type="InParanoid" id="A2T6W2"/>
<dbReference type="OMA" id="LDMNFPL"/>
<dbReference type="OrthoDB" id="893at9604"/>
<dbReference type="TreeFam" id="TF336949"/>
<dbReference type="Proteomes" id="UP000002277">
    <property type="component" value="Chromosome X"/>
</dbReference>
<dbReference type="Bgee" id="ENSPTRG00000022299">
    <property type="expression patterns" value="Expressed in fibroblast and 21 other cell types or tissues"/>
</dbReference>
<dbReference type="GO" id="GO:0005634">
    <property type="term" value="C:nucleus"/>
    <property type="evidence" value="ECO:0007669"/>
    <property type="project" value="UniProtKB-SubCell"/>
</dbReference>
<dbReference type="GO" id="GO:0000981">
    <property type="term" value="F:DNA-binding transcription factor activity, RNA polymerase II-specific"/>
    <property type="evidence" value="ECO:0000318"/>
    <property type="project" value="GO_Central"/>
</dbReference>
<dbReference type="GO" id="GO:0000978">
    <property type="term" value="F:RNA polymerase II cis-regulatory region sequence-specific DNA binding"/>
    <property type="evidence" value="ECO:0000318"/>
    <property type="project" value="GO_Central"/>
</dbReference>
<dbReference type="GO" id="GO:0008270">
    <property type="term" value="F:zinc ion binding"/>
    <property type="evidence" value="ECO:0007669"/>
    <property type="project" value="UniProtKB-KW"/>
</dbReference>
<dbReference type="GO" id="GO:0006357">
    <property type="term" value="P:regulation of transcription by RNA polymerase II"/>
    <property type="evidence" value="ECO:0000318"/>
    <property type="project" value="GO_Central"/>
</dbReference>
<dbReference type="GO" id="GO:0007284">
    <property type="term" value="P:spermatogonial cell division"/>
    <property type="evidence" value="ECO:0007669"/>
    <property type="project" value="Ensembl"/>
</dbReference>
<dbReference type="CDD" id="cd00065">
    <property type="entry name" value="FYVE_like_SF"/>
    <property type="match status" value="1"/>
</dbReference>
<dbReference type="CDD" id="cd07936">
    <property type="entry name" value="SCAN"/>
    <property type="match status" value="1"/>
</dbReference>
<dbReference type="FunFam" id="3.30.160.60:FF:000467">
    <property type="entry name" value="Zinc finger and SCAN domain-containing 21"/>
    <property type="match status" value="2"/>
</dbReference>
<dbReference type="FunFam" id="3.30.160.60:FF:000869">
    <property type="entry name" value="Zinc finger protein 213"/>
    <property type="match status" value="1"/>
</dbReference>
<dbReference type="FunFam" id="1.10.4020.10:FF:000001">
    <property type="entry name" value="zinc finger protein 263 isoform X1"/>
    <property type="match status" value="1"/>
</dbReference>
<dbReference type="FunFam" id="3.30.160.60:FF:000761">
    <property type="entry name" value="Zinc finger protein 449"/>
    <property type="match status" value="1"/>
</dbReference>
<dbReference type="FunFam" id="3.30.160.60:FF:001562">
    <property type="entry name" value="Zinc finger protein 449"/>
    <property type="match status" value="1"/>
</dbReference>
<dbReference type="FunFam" id="3.30.160.60:FF:000959">
    <property type="entry name" value="zinc finger protein 449"/>
    <property type="match status" value="1"/>
</dbReference>
<dbReference type="FunFam" id="3.30.160.60:FF:000070">
    <property type="entry name" value="zinc finger protein 689 isoform X1"/>
    <property type="match status" value="1"/>
</dbReference>
<dbReference type="Gene3D" id="3.30.160.60">
    <property type="entry name" value="Classic Zinc Finger"/>
    <property type="match status" value="7"/>
</dbReference>
<dbReference type="Gene3D" id="1.10.4020.10">
    <property type="entry name" value="DNA breaking-rejoining enzymes"/>
    <property type="match status" value="1"/>
</dbReference>
<dbReference type="InterPro" id="IPR003309">
    <property type="entry name" value="SCAN_dom"/>
</dbReference>
<dbReference type="InterPro" id="IPR038269">
    <property type="entry name" value="SCAN_sf"/>
</dbReference>
<dbReference type="InterPro" id="IPR036236">
    <property type="entry name" value="Znf_C2H2_sf"/>
</dbReference>
<dbReference type="InterPro" id="IPR013087">
    <property type="entry name" value="Znf_C2H2_type"/>
</dbReference>
<dbReference type="PANTHER" id="PTHR23235">
    <property type="entry name" value="KRUEPPEL-LIKE TRANSCRIPTION FACTOR"/>
    <property type="match status" value="1"/>
</dbReference>
<dbReference type="PANTHER" id="PTHR23235:SF142">
    <property type="entry name" value="ZINC FINGER PROTEIN 384"/>
    <property type="match status" value="1"/>
</dbReference>
<dbReference type="Pfam" id="PF02023">
    <property type="entry name" value="SCAN"/>
    <property type="match status" value="1"/>
</dbReference>
<dbReference type="Pfam" id="PF00096">
    <property type="entry name" value="zf-C2H2"/>
    <property type="match status" value="7"/>
</dbReference>
<dbReference type="SMART" id="SM00431">
    <property type="entry name" value="SCAN"/>
    <property type="match status" value="1"/>
</dbReference>
<dbReference type="SMART" id="SM00355">
    <property type="entry name" value="ZnF_C2H2"/>
    <property type="match status" value="7"/>
</dbReference>
<dbReference type="SUPFAM" id="SSF57667">
    <property type="entry name" value="beta-beta-alpha zinc fingers"/>
    <property type="match status" value="4"/>
</dbReference>
<dbReference type="SUPFAM" id="SSF47353">
    <property type="entry name" value="Retrovirus capsid dimerization domain-like"/>
    <property type="match status" value="1"/>
</dbReference>
<dbReference type="PROSITE" id="PS50804">
    <property type="entry name" value="SCAN_BOX"/>
    <property type="match status" value="1"/>
</dbReference>
<dbReference type="PROSITE" id="PS00028">
    <property type="entry name" value="ZINC_FINGER_C2H2_1"/>
    <property type="match status" value="7"/>
</dbReference>
<dbReference type="PROSITE" id="PS50157">
    <property type="entry name" value="ZINC_FINGER_C2H2_2"/>
    <property type="match status" value="7"/>
</dbReference>
<reference key="1">
    <citation type="submission" date="2006-08" db="EMBL/GenBank/DDBJ databases">
        <title>Positive selection in transcription factor genes on the human lineage.</title>
        <authorList>
            <person name="Nickel G.C."/>
            <person name="Tefft D.L."/>
            <person name="Trevarthen K."/>
            <person name="Funt J."/>
            <person name="Adams M.D."/>
        </authorList>
    </citation>
    <scope>NUCLEOTIDE SEQUENCE [GENOMIC DNA]</scope>
</reference>
<keyword id="KW-0238">DNA-binding</keyword>
<keyword id="KW-0479">Metal-binding</keyword>
<keyword id="KW-0539">Nucleus</keyword>
<keyword id="KW-1185">Reference proteome</keyword>
<keyword id="KW-0677">Repeat</keyword>
<keyword id="KW-0804">Transcription</keyword>
<keyword id="KW-0805">Transcription regulation</keyword>
<keyword id="KW-0862">Zinc</keyword>
<keyword id="KW-0863">Zinc-finger</keyword>
<feature type="chain" id="PRO_0000285476" description="Zinc finger protein 449">
    <location>
        <begin position="1"/>
        <end position="518"/>
    </location>
</feature>
<feature type="domain" description="SCAN box" evidence="3">
    <location>
        <begin position="30"/>
        <end position="112"/>
    </location>
</feature>
<feature type="zinc finger region" description="C2H2-type 1" evidence="2">
    <location>
        <begin position="323"/>
        <end position="345"/>
    </location>
</feature>
<feature type="zinc finger region" description="C2H2-type 2" evidence="2">
    <location>
        <begin position="351"/>
        <end position="373"/>
    </location>
</feature>
<feature type="zinc finger region" description="C2H2-type 3" evidence="2">
    <location>
        <begin position="379"/>
        <end position="401"/>
    </location>
</feature>
<feature type="zinc finger region" description="C2H2-type 4" evidence="2">
    <location>
        <begin position="407"/>
        <end position="429"/>
    </location>
</feature>
<feature type="zinc finger region" description="C2H2-type 5" evidence="2">
    <location>
        <begin position="435"/>
        <end position="457"/>
    </location>
</feature>
<feature type="zinc finger region" description="C2H2-type 6" evidence="2">
    <location>
        <begin position="463"/>
        <end position="485"/>
    </location>
</feature>
<feature type="zinc finger region" description="C2H2-type 7" evidence="2">
    <location>
        <begin position="491"/>
        <end position="513"/>
    </location>
</feature>
<feature type="region of interest" description="Disordered" evidence="4">
    <location>
        <begin position="292"/>
        <end position="325"/>
    </location>
</feature>
<feature type="compositionally biased region" description="Polar residues" evidence="4">
    <location>
        <begin position="292"/>
        <end position="304"/>
    </location>
</feature>
<sequence length="518" mass="60017">MAVALGCAIQASLNQGSVFQEYDTDCEVFRQRFRQFQYREAAGPHEAFNKLWELCCQWLKPKMRSKEQILELLVLEQFLTILPTEIETWVREHCPENRERVVSLIEDLQRELEIPEQQVDMHDMLLEELAPVGTAHIPPTMHLESPALQVMGPAQEAPVAEAWIPQAGPPELNYSATGECQNFLDPGYPLPKLDMNFSLENREEPWVKELQDSKEMKQLLDSKIGFEIGIENEEDTSKQKKMETMYPFIVTLEGNALQGPILQKDYVQLENQWETPPEDLQRDLAKLVDQQNPTLGETPENSNLEEPLNPKPHKKKSPGEKPHRCPQCGKCFARKSQLTGHQRIHSGEEPHKCPECGKRFLRSSDLYRHQRLHTGERPYECTVCKKRFTRRSHLIGHQRTHSEEETYKCLECGKSFCHGSSLKRHLKTHTGEKPHRCHNCGKSFSRLTALTLHQRTHTEERPFKCNYCGKSFRQRPSLVIHLRIHTGEKPYKCTHCSKSFRQRAGLIMHQVTHFRGLI</sequence>
<protein>
    <recommendedName>
        <fullName>Zinc finger protein 449</fullName>
    </recommendedName>
</protein>
<evidence type="ECO:0000250" key="1"/>
<evidence type="ECO:0000255" key="2">
    <source>
        <dbReference type="PROSITE-ProRule" id="PRU00042"/>
    </source>
</evidence>
<evidence type="ECO:0000255" key="3">
    <source>
        <dbReference type="PROSITE-ProRule" id="PRU00187"/>
    </source>
</evidence>
<evidence type="ECO:0000256" key="4">
    <source>
        <dbReference type="SAM" id="MobiDB-lite"/>
    </source>
</evidence>
<evidence type="ECO:0000305" key="5"/>
<gene>
    <name type="primary">ZNF449</name>
</gene>
<accession>A2T6W2</accession>
<proteinExistence type="inferred from homology"/>
<organism>
    <name type="scientific">Pan troglodytes</name>
    <name type="common">Chimpanzee</name>
    <dbReference type="NCBI Taxonomy" id="9598"/>
    <lineage>
        <taxon>Eukaryota</taxon>
        <taxon>Metazoa</taxon>
        <taxon>Chordata</taxon>
        <taxon>Craniata</taxon>
        <taxon>Vertebrata</taxon>
        <taxon>Euteleostomi</taxon>
        <taxon>Mammalia</taxon>
        <taxon>Eutheria</taxon>
        <taxon>Euarchontoglires</taxon>
        <taxon>Primates</taxon>
        <taxon>Haplorrhini</taxon>
        <taxon>Catarrhini</taxon>
        <taxon>Hominidae</taxon>
        <taxon>Pan</taxon>
    </lineage>
</organism>
<comment type="function">
    <text evidence="1">May be involved in transcriptional regulation.</text>
</comment>
<comment type="subcellular location">
    <subcellularLocation>
        <location evidence="3">Nucleus</location>
    </subcellularLocation>
</comment>
<comment type="similarity">
    <text evidence="5">Belongs to the krueppel C2H2-type zinc-finger protein family.</text>
</comment>